<protein>
    <recommendedName>
        <fullName>CMP-N-acetylneuraminate-beta-galactosamide-alpha-2,3-sialyltransferase 4</fullName>
        <shortName>Alpha 2,3-ST 4</shortName>
        <shortName>Beta-galactoside alpha-2,3-sialyltransferase 4</shortName>
        <ecNumber evidence="6">2.4.3.2</ecNumber>
        <ecNumber evidence="6">2.4.3.4</ecNumber>
    </recommendedName>
    <alternativeName>
        <fullName>Alpha 2,3-sialyltransferase IV</fullName>
    </alternativeName>
    <alternativeName>
        <fullName>Gal-NAc6S</fullName>
    </alternativeName>
    <alternativeName>
        <fullName evidence="11">Gal-beta-1,3-GalNAc-alpha-2,3-sialyltransferase</fullName>
    </alternativeName>
    <alternativeName>
        <fullName evidence="11">Gal-beta-1,4-GlcNAc-alpha-2,3-sialyltransferase</fullName>
    </alternativeName>
    <alternativeName>
        <fullName>N-acetyllactosaminide alpha-2,3-sialyltransferase</fullName>
        <ecNumber evidence="6 7">2.4.3.6</ecNumber>
    </alternativeName>
    <alternativeName>
        <fullName evidence="12">SAT-3</fullName>
    </alternativeName>
    <alternativeName>
        <fullName>ST-4</fullName>
    </alternativeName>
    <alternativeName>
        <fullName>ST3Gal IV</fullName>
        <shortName>ST3GalIV</shortName>
    </alternativeName>
    <alternativeName>
        <fullName>ST3GalA.2</fullName>
    </alternativeName>
    <alternativeName>
        <fullName evidence="11">STZ</fullName>
    </alternativeName>
    <alternativeName>
        <fullName>Sialyltransferase 4C</fullName>
        <shortName>SIAT4-C</shortName>
    </alternativeName>
</protein>
<feature type="chain" id="PRO_0000149262" description="CMP-N-acetylneuraminate-beta-galactosamide-alpha-2,3-sialyltransferase 4">
    <location>
        <begin position="1"/>
        <end position="333"/>
    </location>
</feature>
<feature type="topological domain" description="Cytoplasmic" evidence="4">
    <location>
        <begin position="1"/>
        <end position="8"/>
    </location>
</feature>
<feature type="transmembrane region" description="Helical; Signal-anchor for type II membrane protein" evidence="4">
    <location>
        <begin position="9"/>
        <end position="26"/>
    </location>
</feature>
<feature type="topological domain" description="Lumenal" evidence="4">
    <location>
        <begin position="27"/>
        <end position="333"/>
    </location>
</feature>
<feature type="glycosylation site" description="N-linked (GlcNAc...) asparagine" evidence="4">
    <location>
        <position position="61"/>
    </location>
</feature>
<feature type="glycosylation site" description="N-linked (GlcNAc...) asparagine" evidence="4">
    <location>
        <position position="131"/>
    </location>
</feature>
<feature type="glycosylation site" description="N-linked (GlcNAc...) asparagine" evidence="4">
    <location>
        <position position="310"/>
    </location>
</feature>
<feature type="glycosylation site" description="N-linked (GlcNAc...) asparagine" evidence="4">
    <location>
        <position position="329"/>
    </location>
</feature>
<feature type="disulfide bond" evidence="1">
    <location>
        <begin position="120"/>
        <end position="273"/>
    </location>
</feature>
<feature type="splice variant" id="VSP_001785" description="In isoform 3 and isoform 7." evidence="8">
    <location>
        <begin position="1"/>
        <end position="11"/>
    </location>
</feature>
<feature type="splice variant" id="VSP_001784" description="In isoform 2 and isoform 6." evidence="8 11">
    <original>MVSKSR</original>
    <variation>MCPAG</variation>
    <location>
        <begin position="1"/>
        <end position="6"/>
    </location>
</feature>
<feature type="splice variant" id="VSP_021104" description="In isoform 5, isoform 6 and isoform 7." evidence="8 10">
    <original>RYIEL</original>
    <variation>S</variation>
    <location>
        <begin position="30"/>
        <end position="34"/>
    </location>
</feature>
<feature type="splice variant" id="VSP_001786" description="In isoform 4." evidence="8 9">
    <original>N</original>
    <variation>KLSPLCS</variation>
    <location>
        <position position="61"/>
    </location>
</feature>
<feature type="sequence conflict" description="In Ref. 8; AAC14162." evidence="13" ref="8">
    <original>NP</original>
    <variation>KG</variation>
    <location>
        <begin position="182"/>
        <end position="183"/>
    </location>
</feature>
<feature type="sequence conflict" description="In Ref. 8; AAC14162." evidence="13" ref="8">
    <original>I</original>
    <variation>T</variation>
    <location>
        <position position="200"/>
    </location>
</feature>
<feature type="sequence conflict" description="In Ref. 8; AAC14162." evidence="13" ref="8">
    <original>M</original>
    <variation>I</variation>
    <location>
        <position position="304"/>
    </location>
</feature>
<gene>
    <name type="primary">ST3GAL4</name>
    <name type="synonym">CGS23</name>
    <name type="synonym">NANTA3</name>
    <name type="synonym">SIAT4C</name>
    <name type="synonym">STZ</name>
</gene>
<reference key="1">
    <citation type="journal article" date="1996" name="J. Biol. Chem.">
        <title>Genomic organization and chromosomal mapping of the Gal beta 1,3GalNAc/Gal beta 1,4GlcNAc alpha 2,3-sialyltransferase.</title>
        <authorList>
            <person name="Kitagawa H."/>
            <person name="Mattei M.-G."/>
            <person name="Paulson J.C."/>
        </authorList>
    </citation>
    <scope>NUCLEOTIDE SEQUENCE [MRNA]</scope>
    <source>
        <tissue>Placenta</tissue>
    </source>
</reference>
<reference key="2">
    <citation type="journal article" date="1994" name="J. Biol. Chem.">
        <title>Cloning of a novel alpha 2,3-sialyltransferase that sialylates glycoprotein and glycolipid carbohydrate groups.</title>
        <authorList>
            <person name="Kitagawa H."/>
            <person name="Paulson J.C."/>
        </authorList>
    </citation>
    <scope>NUCLEOTIDE SEQUENCE [MRNA] (ISOFORM 2)</scope>
    <scope>FUNCTION</scope>
    <scope>CATALYTIC ACTIVITY</scope>
    <scope>BIOPHYSICOCHEMICAL PROPERTIES</scope>
    <scope>PATHWAY</scope>
    <scope>TISSUE SPECIFICITY</scope>
    <source>
        <tissue>Placenta</tissue>
    </source>
</reference>
<reference key="3">
    <citation type="journal article" date="1993" name="J. Biol. Chem.">
        <title>Expression cloning of a novel Gal beta (1-3/1-4) GlcNAc alpha 2,3-sialyltransferase using lectin resistance selection.</title>
        <authorList>
            <person name="Sasaki K."/>
            <person name="Watanabe E."/>
            <person name="Kawashima K."/>
            <person name="Sekine S."/>
            <person name="Dohi T."/>
            <person name="Oshima M."/>
            <person name="Hanai N."/>
            <person name="Nishi T."/>
            <person name="Hasegawa M."/>
        </authorList>
    </citation>
    <scope>NUCLEOTIDE SEQUENCE [MRNA] (ISOFORM 5)</scope>
</reference>
<reference key="4">
    <citation type="journal article" date="2001" name="Glycoconj. J.">
        <title>Identification of nine alternatively spliced alpha2,3-sialyltransferase, ST3Gal IV, transcripts and analysis of their expression by RT-PCR and laser-induced fluorescent capillary electrophoresis (LIF-CE) in twenty-one human tissues.</title>
        <authorList>
            <person name="Grahn A."/>
            <person name="Larson G."/>
        </authorList>
    </citation>
    <scope>NUCLEOTIDE SEQUENCE [MRNA] (ISOFORMS 4; 6 AND 7)</scope>
    <scope>ALTERNATIVE SPLICING</scope>
    <source>
        <tissue>Peripheral blood leukocyte</tissue>
    </source>
</reference>
<reference key="5">
    <citation type="journal article" date="2004" name="Nat. Genet.">
        <title>Complete sequencing and characterization of 21,243 full-length human cDNAs.</title>
        <authorList>
            <person name="Ota T."/>
            <person name="Suzuki Y."/>
            <person name="Nishikawa T."/>
            <person name="Otsuki T."/>
            <person name="Sugiyama T."/>
            <person name="Irie R."/>
            <person name="Wakamatsu A."/>
            <person name="Hayashi K."/>
            <person name="Sato H."/>
            <person name="Nagai K."/>
            <person name="Kimura K."/>
            <person name="Makita H."/>
            <person name="Sekine M."/>
            <person name="Obayashi M."/>
            <person name="Nishi T."/>
            <person name="Shibahara T."/>
            <person name="Tanaka T."/>
            <person name="Ishii S."/>
            <person name="Yamamoto J."/>
            <person name="Saito K."/>
            <person name="Kawai Y."/>
            <person name="Isono Y."/>
            <person name="Nakamura Y."/>
            <person name="Nagahari K."/>
            <person name="Murakami K."/>
            <person name="Yasuda T."/>
            <person name="Iwayanagi T."/>
            <person name="Wagatsuma M."/>
            <person name="Shiratori A."/>
            <person name="Sudo H."/>
            <person name="Hosoiri T."/>
            <person name="Kaku Y."/>
            <person name="Kodaira H."/>
            <person name="Kondo H."/>
            <person name="Sugawara M."/>
            <person name="Takahashi M."/>
            <person name="Kanda K."/>
            <person name="Yokoi T."/>
            <person name="Furuya T."/>
            <person name="Kikkawa E."/>
            <person name="Omura Y."/>
            <person name="Abe K."/>
            <person name="Kamihara K."/>
            <person name="Katsuta N."/>
            <person name="Sato K."/>
            <person name="Tanikawa M."/>
            <person name="Yamazaki M."/>
            <person name="Ninomiya K."/>
            <person name="Ishibashi T."/>
            <person name="Yamashita H."/>
            <person name="Murakawa K."/>
            <person name="Fujimori K."/>
            <person name="Tanai H."/>
            <person name="Kimata M."/>
            <person name="Watanabe M."/>
            <person name="Hiraoka S."/>
            <person name="Chiba Y."/>
            <person name="Ishida S."/>
            <person name="Ono Y."/>
            <person name="Takiguchi S."/>
            <person name="Watanabe S."/>
            <person name="Yosida M."/>
            <person name="Hotuta T."/>
            <person name="Kusano J."/>
            <person name="Kanehori K."/>
            <person name="Takahashi-Fujii A."/>
            <person name="Hara H."/>
            <person name="Tanase T.-O."/>
            <person name="Nomura Y."/>
            <person name="Togiya S."/>
            <person name="Komai F."/>
            <person name="Hara R."/>
            <person name="Takeuchi K."/>
            <person name="Arita M."/>
            <person name="Imose N."/>
            <person name="Musashino K."/>
            <person name="Yuuki H."/>
            <person name="Oshima A."/>
            <person name="Sasaki N."/>
            <person name="Aotsuka S."/>
            <person name="Yoshikawa Y."/>
            <person name="Matsunawa H."/>
            <person name="Ichihara T."/>
            <person name="Shiohata N."/>
            <person name="Sano S."/>
            <person name="Moriya S."/>
            <person name="Momiyama H."/>
            <person name="Satoh N."/>
            <person name="Takami S."/>
            <person name="Terashima Y."/>
            <person name="Suzuki O."/>
            <person name="Nakagawa S."/>
            <person name="Senoh A."/>
            <person name="Mizoguchi H."/>
            <person name="Goto Y."/>
            <person name="Shimizu F."/>
            <person name="Wakebe H."/>
            <person name="Hishigaki H."/>
            <person name="Watanabe T."/>
            <person name="Sugiyama A."/>
            <person name="Takemoto M."/>
            <person name="Kawakami B."/>
            <person name="Yamazaki M."/>
            <person name="Watanabe K."/>
            <person name="Kumagai A."/>
            <person name="Itakura S."/>
            <person name="Fukuzumi Y."/>
            <person name="Fujimori Y."/>
            <person name="Komiyama M."/>
            <person name="Tashiro H."/>
            <person name="Tanigami A."/>
            <person name="Fujiwara T."/>
            <person name="Ono T."/>
            <person name="Yamada K."/>
            <person name="Fujii Y."/>
            <person name="Ozaki K."/>
            <person name="Hirao M."/>
            <person name="Ohmori Y."/>
            <person name="Kawabata A."/>
            <person name="Hikiji T."/>
            <person name="Kobatake N."/>
            <person name="Inagaki H."/>
            <person name="Ikema Y."/>
            <person name="Okamoto S."/>
            <person name="Okitani R."/>
            <person name="Kawakami T."/>
            <person name="Noguchi S."/>
            <person name="Itoh T."/>
            <person name="Shigeta K."/>
            <person name="Senba T."/>
            <person name="Matsumura K."/>
            <person name="Nakajima Y."/>
            <person name="Mizuno T."/>
            <person name="Morinaga M."/>
            <person name="Sasaki M."/>
            <person name="Togashi T."/>
            <person name="Oyama M."/>
            <person name="Hata H."/>
            <person name="Watanabe M."/>
            <person name="Komatsu T."/>
            <person name="Mizushima-Sugano J."/>
            <person name="Satoh T."/>
            <person name="Shirai Y."/>
            <person name="Takahashi Y."/>
            <person name="Nakagawa K."/>
            <person name="Okumura K."/>
            <person name="Nagase T."/>
            <person name="Nomura N."/>
            <person name="Kikuchi H."/>
            <person name="Masuho Y."/>
            <person name="Yamashita R."/>
            <person name="Nakai K."/>
            <person name="Yada T."/>
            <person name="Nakamura Y."/>
            <person name="Ohara O."/>
            <person name="Isogai T."/>
            <person name="Sugano S."/>
        </authorList>
    </citation>
    <scope>NUCLEOTIDE SEQUENCE [LARGE SCALE MRNA] (ISOFORM 4)</scope>
    <source>
        <tissue>Placenta</tissue>
    </source>
</reference>
<reference key="6">
    <citation type="journal article" date="2006" name="Nature">
        <title>Human chromosome 11 DNA sequence and analysis including novel gene identification.</title>
        <authorList>
            <person name="Taylor T.D."/>
            <person name="Noguchi H."/>
            <person name="Totoki Y."/>
            <person name="Toyoda A."/>
            <person name="Kuroki Y."/>
            <person name="Dewar K."/>
            <person name="Lloyd C."/>
            <person name="Itoh T."/>
            <person name="Takeda T."/>
            <person name="Kim D.-W."/>
            <person name="She X."/>
            <person name="Barlow K.F."/>
            <person name="Bloom T."/>
            <person name="Bruford E."/>
            <person name="Chang J.L."/>
            <person name="Cuomo C.A."/>
            <person name="Eichler E."/>
            <person name="FitzGerald M.G."/>
            <person name="Jaffe D.B."/>
            <person name="LaButti K."/>
            <person name="Nicol R."/>
            <person name="Park H.-S."/>
            <person name="Seaman C."/>
            <person name="Sougnez C."/>
            <person name="Yang X."/>
            <person name="Zimmer A.R."/>
            <person name="Zody M.C."/>
            <person name="Birren B.W."/>
            <person name="Nusbaum C."/>
            <person name="Fujiyama A."/>
            <person name="Hattori M."/>
            <person name="Rogers J."/>
            <person name="Lander E.S."/>
            <person name="Sakaki Y."/>
        </authorList>
    </citation>
    <scope>NUCLEOTIDE SEQUENCE [LARGE SCALE GENOMIC DNA]</scope>
</reference>
<reference key="7">
    <citation type="journal article" date="2004" name="Genome Res.">
        <title>The status, quality, and expansion of the NIH full-length cDNA project: the Mammalian Gene Collection (MGC).</title>
        <authorList>
            <consortium name="The MGC Project Team"/>
        </authorList>
    </citation>
    <scope>NUCLEOTIDE SEQUENCE [LARGE SCALE MRNA] (ISOFORM 1)</scope>
    <source>
        <tissue>Placenta</tissue>
    </source>
</reference>
<reference key="8">
    <citation type="journal article" date="1996" name="Biochemistry">
        <title>Characterization of two glycolipid: alpha 2-3sialyltransferases, SAT-3 (CMP-NeuAc:nLcOse4Cer alpha 2-3sialyltransferase) and SAT-4 (CMP-NeuAc:GgOse4Cer alpha 2-3sialyltransferase), from human colon carcinoma (Colo 205) cell line.</title>
        <authorList>
            <person name="Basu S.S."/>
            <person name="Basu M."/>
            <person name="Li Z."/>
            <person name="Basu S."/>
        </authorList>
    </citation>
    <scope>NUCLEOTIDE SEQUENCE [MRNA] OF 48-314</scope>
    <scope>FUNCTION</scope>
    <scope>CATALYTIC ACTIVITY</scope>
    <source>
        <tissue>Colon carcinoma</tissue>
    </source>
</reference>
<reference key="9">
    <citation type="journal article" date="2015" name="Blood">
        <title>ST3Gal-4 is the primary sialyltransferase regulating the synthesis of E-, P-, and L-selectin ligands on human myeloid leukocytes.</title>
        <authorList>
            <person name="Mondal N."/>
            <person name="Buffone A. Jr."/>
            <person name="Stolfa G."/>
            <person name="Antonopoulos A."/>
            <person name="Lau J.T."/>
            <person name="Haslam S.M."/>
            <person name="Dell A."/>
            <person name="Neelamegham S."/>
        </authorList>
    </citation>
    <scope>FUNCTION</scope>
</reference>
<keyword id="KW-0025">Alternative splicing</keyword>
<keyword id="KW-1015">Disulfide bond</keyword>
<keyword id="KW-0325">Glycoprotein</keyword>
<keyword id="KW-0328">Glycosyltransferase</keyword>
<keyword id="KW-0333">Golgi apparatus</keyword>
<keyword id="KW-0443">Lipid metabolism</keyword>
<keyword id="KW-0472">Membrane</keyword>
<keyword id="KW-1267">Proteomics identification</keyword>
<keyword id="KW-1185">Reference proteome</keyword>
<keyword id="KW-0964">Secreted</keyword>
<keyword id="KW-0735">Signal-anchor</keyword>
<keyword id="KW-0808">Transferase</keyword>
<keyword id="KW-0812">Transmembrane</keyword>
<keyword id="KW-1133">Transmembrane helix</keyword>
<proteinExistence type="evidence at protein level"/>
<name>SIA4C_HUMAN</name>
<dbReference type="EC" id="2.4.3.2" evidence="6"/>
<dbReference type="EC" id="2.4.3.4" evidence="6"/>
<dbReference type="EC" id="2.4.3.6" evidence="6 7"/>
<dbReference type="EMBL" id="L23767">
    <property type="protein sequence ID" value="AAA16460.1"/>
    <property type="molecule type" value="mRNA"/>
</dbReference>
<dbReference type="EMBL" id="X74570">
    <property type="protein sequence ID" value="CAA52662.1"/>
    <property type="molecule type" value="mRNA"/>
</dbReference>
<dbReference type="EMBL" id="AF516603">
    <property type="protein sequence ID" value="AAM66432.1"/>
    <property type="molecule type" value="mRNA"/>
</dbReference>
<dbReference type="EMBL" id="AF516604">
    <property type="protein sequence ID" value="AAM66433.1"/>
    <property type="molecule type" value="mRNA"/>
</dbReference>
<dbReference type="EMBL" id="AY040826">
    <property type="protein sequence ID" value="AAK93790.1"/>
    <property type="molecule type" value="mRNA"/>
</dbReference>
<dbReference type="EMBL" id="AK291577">
    <property type="protein sequence ID" value="BAF84266.1"/>
    <property type="molecule type" value="mRNA"/>
</dbReference>
<dbReference type="EMBL" id="AP000806">
    <property type="status" value="NOT_ANNOTATED_CDS"/>
    <property type="molecule type" value="Genomic_DNA"/>
</dbReference>
<dbReference type="EMBL" id="AP001318">
    <property type="status" value="NOT_ANNOTATED_CDS"/>
    <property type="molecule type" value="Genomic_DNA"/>
</dbReference>
<dbReference type="EMBL" id="BC010645">
    <property type="protein sequence ID" value="AAH10645.1"/>
    <property type="molecule type" value="mRNA"/>
</dbReference>
<dbReference type="EMBL" id="AF035249">
    <property type="protein sequence ID" value="AAC14162.1"/>
    <property type="molecule type" value="mRNA"/>
</dbReference>
<dbReference type="CCDS" id="CCDS58193.1">
    <molecule id="Q11206-1"/>
</dbReference>
<dbReference type="CCDS" id="CCDS58194.1">
    <molecule id="Q11206-2"/>
</dbReference>
<dbReference type="CCDS" id="CCDS8474.1">
    <molecule id="Q11206-5"/>
</dbReference>
<dbReference type="PIR" id="A48715">
    <property type="entry name" value="A48715"/>
</dbReference>
<dbReference type="PIR" id="A49879">
    <property type="entry name" value="A49879"/>
</dbReference>
<dbReference type="RefSeq" id="NP_001241686.1">
    <molecule id="Q11206-1"/>
    <property type="nucleotide sequence ID" value="NM_001254757.2"/>
</dbReference>
<dbReference type="RefSeq" id="NP_001241687.1">
    <molecule id="Q11206-1"/>
    <property type="nucleotide sequence ID" value="NM_001254758.2"/>
</dbReference>
<dbReference type="RefSeq" id="NP_001241688.1">
    <molecule id="Q11206-2"/>
    <property type="nucleotide sequence ID" value="NM_001254759.2"/>
</dbReference>
<dbReference type="RefSeq" id="NP_001335328.1">
    <molecule id="Q11206-1"/>
    <property type="nucleotide sequence ID" value="NM_001348399.2"/>
</dbReference>
<dbReference type="RefSeq" id="NP_001335329.1">
    <molecule id="Q11206-5"/>
    <property type="nucleotide sequence ID" value="NM_001348400.2"/>
</dbReference>
<dbReference type="RefSeq" id="NP_006269.1">
    <molecule id="Q11206-5"/>
    <property type="nucleotide sequence ID" value="NM_006278.3"/>
</dbReference>
<dbReference type="RefSeq" id="XP_024304426.1">
    <molecule id="Q11206-1"/>
    <property type="nucleotide sequence ID" value="XM_024448658.2"/>
</dbReference>
<dbReference type="RefSeq" id="XP_047283374.1">
    <molecule id="Q11206-1"/>
    <property type="nucleotide sequence ID" value="XM_047427418.1"/>
</dbReference>
<dbReference type="RefSeq" id="XP_047283376.1">
    <molecule id="Q11206-5"/>
    <property type="nucleotide sequence ID" value="XM_047427420.1"/>
</dbReference>
<dbReference type="RefSeq" id="XP_054225628.1">
    <molecule id="Q11206-1"/>
    <property type="nucleotide sequence ID" value="XM_054369653.1"/>
</dbReference>
<dbReference type="RefSeq" id="XP_054225629.1">
    <molecule id="Q11206-1"/>
    <property type="nucleotide sequence ID" value="XM_054369654.1"/>
</dbReference>
<dbReference type="RefSeq" id="XP_054225630.1">
    <molecule id="Q11206-5"/>
    <property type="nucleotide sequence ID" value="XM_054369655.1"/>
</dbReference>
<dbReference type="SMR" id="Q11206"/>
<dbReference type="BioGRID" id="112377">
    <property type="interactions" value="67"/>
</dbReference>
<dbReference type="FunCoup" id="Q11206">
    <property type="interactions" value="370"/>
</dbReference>
<dbReference type="IntAct" id="Q11206">
    <property type="interactions" value="46"/>
</dbReference>
<dbReference type="STRING" id="9606.ENSP00000436047"/>
<dbReference type="SwissLipids" id="SLP:000001384"/>
<dbReference type="CAZy" id="GT29">
    <property type="family name" value="Glycosyltransferase Family 29"/>
</dbReference>
<dbReference type="GlyCosmos" id="Q11206">
    <property type="glycosylation" value="4 sites, No reported glycans"/>
</dbReference>
<dbReference type="GlyGen" id="Q11206">
    <property type="glycosylation" value="6 sites, 3 N-linked glycans (3 sites), 1 O-linked glycan (1 site)"/>
</dbReference>
<dbReference type="iPTMnet" id="Q11206"/>
<dbReference type="PhosphoSitePlus" id="Q11206"/>
<dbReference type="SwissPalm" id="Q11206"/>
<dbReference type="BioMuta" id="ST3GAL4"/>
<dbReference type="jPOST" id="Q11206"/>
<dbReference type="MassIVE" id="Q11206"/>
<dbReference type="PaxDb" id="9606-ENSP00000436047"/>
<dbReference type="PeptideAtlas" id="Q11206"/>
<dbReference type="ProteomicsDB" id="58900">
    <molecule id="Q11206-1"/>
</dbReference>
<dbReference type="ProteomicsDB" id="58901">
    <molecule id="Q11206-2"/>
</dbReference>
<dbReference type="ProteomicsDB" id="58902">
    <molecule id="Q11206-3"/>
</dbReference>
<dbReference type="ProteomicsDB" id="58903">
    <molecule id="Q11206-4"/>
</dbReference>
<dbReference type="ProteomicsDB" id="58904">
    <molecule id="Q11206-5"/>
</dbReference>
<dbReference type="ProteomicsDB" id="72151"/>
<dbReference type="Pumba" id="Q11206"/>
<dbReference type="Antibodypedia" id="33000">
    <property type="antibodies" value="167 antibodies from 25 providers"/>
</dbReference>
<dbReference type="DNASU" id="6484"/>
<dbReference type="Ensembl" id="ENST00000227495.10">
    <molecule id="Q11206-5"/>
    <property type="protein sequence ID" value="ENSP00000227495.6"/>
    <property type="gene ID" value="ENSG00000110080.20"/>
</dbReference>
<dbReference type="Ensembl" id="ENST00000392669.6">
    <molecule id="Q11206-1"/>
    <property type="protein sequence ID" value="ENSP00000376437.2"/>
    <property type="gene ID" value="ENSG00000110080.20"/>
</dbReference>
<dbReference type="Ensembl" id="ENST00000444328.7">
    <molecule id="Q11206-1"/>
    <property type="protein sequence ID" value="ENSP00000394354.2"/>
    <property type="gene ID" value="ENSG00000110080.20"/>
</dbReference>
<dbReference type="Ensembl" id="ENST00000449406.6">
    <molecule id="Q11206-3"/>
    <property type="protein sequence ID" value="ENSP00000399444.2"/>
    <property type="gene ID" value="ENSG00000110080.20"/>
</dbReference>
<dbReference type="Ensembl" id="ENST00000526727.5">
    <molecule id="Q11206-1"/>
    <property type="protein sequence ID" value="ENSP00000436047.1"/>
    <property type="gene ID" value="ENSG00000110080.20"/>
</dbReference>
<dbReference type="Ensembl" id="ENST00000530591.5">
    <molecule id="Q11206-5"/>
    <property type="protein sequence ID" value="ENSP00000433989.1"/>
    <property type="gene ID" value="ENSG00000110080.20"/>
</dbReference>
<dbReference type="Ensembl" id="ENST00000532243.5">
    <molecule id="Q11206-2"/>
    <property type="protein sequence ID" value="ENSP00000434349.1"/>
    <property type="gene ID" value="ENSG00000110080.20"/>
</dbReference>
<dbReference type="Ensembl" id="ENST00000534083.5">
    <molecule id="Q11206-1"/>
    <property type="protein sequence ID" value="ENSP00000433318.1"/>
    <property type="gene ID" value="ENSG00000110080.20"/>
</dbReference>
<dbReference type="Ensembl" id="ENST00000534457.5">
    <molecule id="Q11206-6"/>
    <property type="protein sequence ID" value="ENSP00000434668.1"/>
    <property type="gene ID" value="ENSG00000110080.20"/>
</dbReference>
<dbReference type="GeneID" id="6484"/>
<dbReference type="KEGG" id="hsa:6484"/>
<dbReference type="MANE-Select" id="ENST00000444328.7">
    <property type="protein sequence ID" value="ENSP00000394354.2"/>
    <property type="RefSeq nucleotide sequence ID" value="NM_001254757.2"/>
    <property type="RefSeq protein sequence ID" value="NP_001241686.1"/>
</dbReference>
<dbReference type="UCSC" id="uc001qds.4">
    <molecule id="Q11206-1"/>
    <property type="organism name" value="human"/>
</dbReference>
<dbReference type="AGR" id="HGNC:10864"/>
<dbReference type="CTD" id="6484"/>
<dbReference type="DisGeNET" id="6484"/>
<dbReference type="GeneCards" id="ST3GAL4"/>
<dbReference type="HGNC" id="HGNC:10864">
    <property type="gene designation" value="ST3GAL4"/>
</dbReference>
<dbReference type="HPA" id="ENSG00000110080">
    <property type="expression patterns" value="Low tissue specificity"/>
</dbReference>
<dbReference type="MIM" id="104240">
    <property type="type" value="gene"/>
</dbReference>
<dbReference type="neXtProt" id="NX_Q11206"/>
<dbReference type="OpenTargets" id="ENSG00000110080"/>
<dbReference type="PharmGKB" id="PA35766"/>
<dbReference type="VEuPathDB" id="HostDB:ENSG00000110080"/>
<dbReference type="eggNOG" id="KOG2692">
    <property type="taxonomic scope" value="Eukaryota"/>
</dbReference>
<dbReference type="GeneTree" id="ENSGT00940000158893"/>
<dbReference type="HOGENOM" id="CLU_032020_1_0_1"/>
<dbReference type="InParanoid" id="Q11206"/>
<dbReference type="OMA" id="WEPCYLL"/>
<dbReference type="OrthoDB" id="10264956at2759"/>
<dbReference type="PAN-GO" id="Q11206">
    <property type="GO annotations" value="4 GO annotations based on evolutionary models"/>
</dbReference>
<dbReference type="PhylomeDB" id="Q11206"/>
<dbReference type="TreeFam" id="TF354325"/>
<dbReference type="BioCyc" id="MetaCyc:HS03285-MONOMER"/>
<dbReference type="BRENDA" id="2.4.99.2">
    <property type="organism ID" value="2681"/>
</dbReference>
<dbReference type="BRENDA" id="2.4.99.6">
    <property type="organism ID" value="2681"/>
</dbReference>
<dbReference type="PathwayCommons" id="Q11206"/>
<dbReference type="Reactome" id="R-HSA-1912420">
    <property type="pathway name" value="Pre-NOTCH Processing in Golgi"/>
</dbReference>
<dbReference type="Reactome" id="R-HSA-2022854">
    <property type="pathway name" value="Keratan sulfate biosynthesis"/>
</dbReference>
<dbReference type="Reactome" id="R-HSA-4085001">
    <property type="pathway name" value="Sialic acid metabolism"/>
</dbReference>
<dbReference type="Reactome" id="R-HSA-9037629">
    <property type="pathway name" value="Lewis blood group biosynthesis"/>
</dbReference>
<dbReference type="Reactome" id="R-HSA-9683673">
    <property type="pathway name" value="Maturation of protein 3a"/>
</dbReference>
<dbReference type="Reactome" id="R-HSA-9694548">
    <property type="pathway name" value="Maturation of spike protein"/>
</dbReference>
<dbReference type="Reactome" id="R-HSA-9694719">
    <property type="pathway name" value="Maturation of protein 3a"/>
</dbReference>
<dbReference type="Reactome" id="R-HSA-975577">
    <property type="pathway name" value="N-Glycan antennae elongation"/>
</dbReference>
<dbReference type="Reactome" id="R-HSA-977068">
    <property type="pathway name" value="Termination of O-glycan biosynthesis"/>
</dbReference>
<dbReference type="SignaLink" id="Q11206"/>
<dbReference type="SIGNOR" id="Q11206"/>
<dbReference type="UniPathway" id="UPA00378"/>
<dbReference type="BioGRID-ORCS" id="6484">
    <property type="hits" value="17 hits in 1162 CRISPR screens"/>
</dbReference>
<dbReference type="ChiTaRS" id="ST3GAL4">
    <property type="organism name" value="human"/>
</dbReference>
<dbReference type="GeneWiki" id="ST3GAL4"/>
<dbReference type="GenomeRNAi" id="6484"/>
<dbReference type="Pharos" id="Q11206">
    <property type="development level" value="Tbio"/>
</dbReference>
<dbReference type="PRO" id="PR:Q11206"/>
<dbReference type="Proteomes" id="UP000005640">
    <property type="component" value="Chromosome 11"/>
</dbReference>
<dbReference type="RNAct" id="Q11206">
    <property type="molecule type" value="protein"/>
</dbReference>
<dbReference type="Bgee" id="ENSG00000110080">
    <property type="expression patterns" value="Expressed in lower esophagus mucosa and 171 other cell types or tissues"/>
</dbReference>
<dbReference type="ExpressionAtlas" id="Q11206">
    <property type="expression patterns" value="baseline and differential"/>
</dbReference>
<dbReference type="GO" id="GO:0005576">
    <property type="term" value="C:extracellular region"/>
    <property type="evidence" value="ECO:0007669"/>
    <property type="project" value="UniProtKB-SubCell"/>
</dbReference>
<dbReference type="GO" id="GO:0032580">
    <property type="term" value="C:Golgi cisterna membrane"/>
    <property type="evidence" value="ECO:0007669"/>
    <property type="project" value="UniProtKB-SubCell"/>
</dbReference>
<dbReference type="GO" id="GO:0000139">
    <property type="term" value="C:Golgi membrane"/>
    <property type="evidence" value="ECO:0000304"/>
    <property type="project" value="Reactome"/>
</dbReference>
<dbReference type="GO" id="GO:0016020">
    <property type="term" value="C:membrane"/>
    <property type="evidence" value="ECO:0007005"/>
    <property type="project" value="UniProtKB"/>
</dbReference>
<dbReference type="GO" id="GO:0047288">
    <property type="term" value="F:beta-D-galactosyl-(1-&gt;3)-N-acetyl-beta-D-galactosaminide alpha-2,3- sialyltransferase"/>
    <property type="evidence" value="ECO:0000314"/>
    <property type="project" value="BHF-UCL"/>
</dbReference>
<dbReference type="GO" id="GO:0003836">
    <property type="term" value="F:beta-galactoside (CMP) alpha-2,3-sialyltransferase activity"/>
    <property type="evidence" value="ECO:0000314"/>
    <property type="project" value="BHF-UCL"/>
</dbReference>
<dbReference type="GO" id="GO:0008118">
    <property type="term" value="F:N-acetyllactosaminide alpha-2,3-sialyltransferase activity"/>
    <property type="evidence" value="ECO:0000314"/>
    <property type="project" value="UniProtKB"/>
</dbReference>
<dbReference type="GO" id="GO:0008373">
    <property type="term" value="F:sialyltransferase activity"/>
    <property type="evidence" value="ECO:0000304"/>
    <property type="project" value="Reactome"/>
</dbReference>
<dbReference type="GO" id="GO:0050890">
    <property type="term" value="P:cognition"/>
    <property type="evidence" value="ECO:0000315"/>
    <property type="project" value="UniProtKB"/>
</dbReference>
<dbReference type="GO" id="GO:0009247">
    <property type="term" value="P:glycolipid biosynthetic process"/>
    <property type="evidence" value="ECO:0000314"/>
    <property type="project" value="BHF-UCL"/>
</dbReference>
<dbReference type="GO" id="GO:0009101">
    <property type="term" value="P:glycoprotein biosynthetic process"/>
    <property type="evidence" value="ECO:0000314"/>
    <property type="project" value="BHF-UCL"/>
</dbReference>
<dbReference type="GO" id="GO:0018146">
    <property type="term" value="P:keratan sulfate proteoglycan biosynthetic process"/>
    <property type="evidence" value="ECO:0000304"/>
    <property type="project" value="Reactome"/>
</dbReference>
<dbReference type="GO" id="GO:0030259">
    <property type="term" value="P:lipid glycosylation"/>
    <property type="evidence" value="ECO:0000314"/>
    <property type="project" value="BHF-UCL"/>
</dbReference>
<dbReference type="GO" id="GO:0016266">
    <property type="term" value="P:O-glycan processing"/>
    <property type="evidence" value="ECO:0000304"/>
    <property type="project" value="Reactome"/>
</dbReference>
<dbReference type="GO" id="GO:0009312">
    <property type="term" value="P:oligosaccharide biosynthetic process"/>
    <property type="evidence" value="ECO:0000314"/>
    <property type="project" value="BHF-UCL"/>
</dbReference>
<dbReference type="GO" id="GO:0030194">
    <property type="term" value="P:positive regulation of blood coagulation"/>
    <property type="evidence" value="ECO:0000250"/>
    <property type="project" value="UniProtKB"/>
</dbReference>
<dbReference type="GO" id="GO:1903238">
    <property type="term" value="P:positive regulation of leukocyte tethering or rolling"/>
    <property type="evidence" value="ECO:0000315"/>
    <property type="project" value="UniProtKB"/>
</dbReference>
<dbReference type="GO" id="GO:0006486">
    <property type="term" value="P:protein glycosylation"/>
    <property type="evidence" value="ECO:0000314"/>
    <property type="project" value="BHF-UCL"/>
</dbReference>
<dbReference type="GO" id="GO:1990743">
    <property type="term" value="P:protein sialylation"/>
    <property type="evidence" value="ECO:0000314"/>
    <property type="project" value="BHF-UCL"/>
</dbReference>
<dbReference type="GO" id="GO:0097503">
    <property type="term" value="P:sialylation"/>
    <property type="evidence" value="ECO:0000314"/>
    <property type="project" value="BHF-UCL"/>
</dbReference>
<dbReference type="GO" id="GO:0019082">
    <property type="term" value="P:viral protein processing"/>
    <property type="evidence" value="ECO:0000304"/>
    <property type="project" value="Reactome"/>
</dbReference>
<dbReference type="CDD" id="cd23982">
    <property type="entry name" value="GT29_ST3GAL4"/>
    <property type="match status" value="1"/>
</dbReference>
<dbReference type="FunFam" id="3.90.1480.20:FF:000005">
    <property type="entry name" value="ST3 beta-galactoside alpha-2,3-sialyltransferase 4"/>
    <property type="match status" value="1"/>
</dbReference>
<dbReference type="Gene3D" id="3.90.1480.20">
    <property type="entry name" value="Glycosyl transferase family 29"/>
    <property type="match status" value="1"/>
</dbReference>
<dbReference type="InterPro" id="IPR001675">
    <property type="entry name" value="Glyco_trans_29"/>
</dbReference>
<dbReference type="InterPro" id="IPR051142">
    <property type="entry name" value="Glycosyltransferase_29"/>
</dbReference>
<dbReference type="InterPro" id="IPR038578">
    <property type="entry name" value="GT29-like_sf"/>
</dbReference>
<dbReference type="InterPro" id="IPR012163">
    <property type="entry name" value="Sialyl_trans"/>
</dbReference>
<dbReference type="PANTHER" id="PTHR13713:SF57">
    <property type="entry name" value="CMP-N-ACETYLNEURAMINATE-BETA-GALACTOSAMIDE-ALPHA-2,3-SIALYLTRANSFERASE 4"/>
    <property type="match status" value="1"/>
</dbReference>
<dbReference type="PANTHER" id="PTHR13713">
    <property type="entry name" value="SIALYLTRANSFERASE"/>
    <property type="match status" value="1"/>
</dbReference>
<dbReference type="Pfam" id="PF00777">
    <property type="entry name" value="Glyco_transf_29"/>
    <property type="match status" value="1"/>
</dbReference>
<dbReference type="PIRSF" id="PIRSF005557">
    <property type="entry name" value="Sialyl_trans"/>
    <property type="match status" value="1"/>
</dbReference>
<comment type="function">
    <text evidence="2 3 5 6 7">A beta-galactoside alpha2-3 sialyltransferase involved in terminal sialylation of glycoproteins and glycolipids (PubMed:8288606, PubMed:8611500). Catalyzes the transfer of sialic acid (N-acetyl-neuraminic acid; Neu5Ac) from the nucleotide sugar donor CMP-Neu5Ac onto acceptor Galbeta-(1-&gt;3)-GalNAc- and Galbeta-(1-&gt;4)-GlcNAc-terminated glycoconjugates through an alpha2-3 linkage (PubMed:8288606, PubMed:8611500). Plays a major role in hemostasis. Responsible for sialylation of plasma VWF/von Willebrand factor, preventing its recognition by asialoglycoprotein receptors (ASGPR) and subsequent clearance. Regulates ASGPR-mediated clearance of platelets (By similarity). Participates in the biosynthesis of the sialyl Lewis X epitopes, both on O- and N-glycans, which are recognized by SELE/E-selectin, SELP/P-selectin and SELL/L-selectin. Essential for selectin-mediated rolling and adhesion of leukocytes during extravasation (PubMed:25498912). Contributes to adhesion and transendothelial migration of neutrophils likely through terminal sialylation of CXCR2 (By similarity). In glycosphingolipid biosynthesis, sialylates GM1 and GA1 gangliosides to form GD1a and GM1b, respectively (PubMed:8288606). Metabolizes brain c-series ganglioside GT1c forming GQ1c (By similarity). Synthesizes ganglioside LM1 (IV3Neu5Ac-nLc4Cer), a major structural component of peripheral nerve myelin (PubMed:8611500).</text>
</comment>
<comment type="catalytic activity">
    <reaction evidence="6">
        <text>a beta-D-galactosyl-(1-&gt;3)-N-acetyl-beta-D-galactosaminyl derivative + CMP-N-acetyl-beta-neuraminate = an N-acetyl-alpha-neuraminyl-(2-&gt;3)-beta-D-galactosyl-(1-&gt;3)-N-acetyl-beta-D-galactosaminyl derivative + CMP + H(+)</text>
        <dbReference type="Rhea" id="RHEA:52380"/>
        <dbReference type="ChEBI" id="CHEBI:15378"/>
        <dbReference type="ChEBI" id="CHEBI:57812"/>
        <dbReference type="ChEBI" id="CHEBI:60377"/>
        <dbReference type="ChEBI" id="CHEBI:136588"/>
        <dbReference type="ChEBI" id="CHEBI:136589"/>
        <dbReference type="EC" id="2.4.3.2"/>
    </reaction>
    <physiologicalReaction direction="left-to-right" evidence="14">
        <dbReference type="Rhea" id="RHEA:52381"/>
    </physiologicalReaction>
</comment>
<comment type="catalytic activity">
    <reaction evidence="6">
        <text>a beta-D-galactosyl-(1-&gt;3)-N-acetyl-alpha-D-galactosaminyl derivative + CMP-N-acetyl-beta-neuraminate = an N-acetyl-alpha-neuraminyl-(2-&gt;3)-beta-D-galactosyl-(1-&gt;3)-N-acetyl-alpha-D-galactosaminyl derivative + CMP + H(+)</text>
        <dbReference type="Rhea" id="RHEA:21616"/>
        <dbReference type="ChEBI" id="CHEBI:15378"/>
        <dbReference type="ChEBI" id="CHEBI:57812"/>
        <dbReference type="ChEBI" id="CHEBI:60377"/>
        <dbReference type="ChEBI" id="CHEBI:133470"/>
        <dbReference type="ChEBI" id="CHEBI:139596"/>
        <dbReference type="EC" id="2.4.3.4"/>
    </reaction>
    <physiologicalReaction direction="left-to-right" evidence="14">
        <dbReference type="Rhea" id="RHEA:21617"/>
    </physiologicalReaction>
</comment>
<comment type="catalytic activity">
    <reaction evidence="6 7">
        <text>a beta-D-galactosyl-(1-&gt;4)-N-acetyl-beta-D-glucosaminyl derivative + CMP-N-acetyl-beta-neuraminate = an N-acetyl-alpha-neuraminyl-(2-&gt;3)-beta-D-galactosyl-(1-&gt;4)-N-acetyl-beta-D-glucosaminyl derivative + CMP + H(+)</text>
        <dbReference type="Rhea" id="RHEA:52316"/>
        <dbReference type="ChEBI" id="CHEBI:15378"/>
        <dbReference type="ChEBI" id="CHEBI:57812"/>
        <dbReference type="ChEBI" id="CHEBI:60377"/>
        <dbReference type="ChEBI" id="CHEBI:133507"/>
        <dbReference type="ChEBI" id="CHEBI:136545"/>
        <dbReference type="EC" id="2.4.3.6"/>
    </reaction>
    <physiologicalReaction direction="left-to-right" evidence="14 15">
        <dbReference type="Rhea" id="RHEA:52317"/>
    </physiologicalReaction>
</comment>
<comment type="catalytic activity">
    <reaction evidence="6">
        <text>a ganglioside GM1 (d18:1(4E)) + CMP-N-acetyl-beta-neuraminate = a ganglioside GD1a (d18:1(4E)) + CMP + H(+)</text>
        <dbReference type="Rhea" id="RHEA:18021"/>
        <dbReference type="ChEBI" id="CHEBI:15378"/>
        <dbReference type="ChEBI" id="CHEBI:57812"/>
        <dbReference type="ChEBI" id="CHEBI:60377"/>
        <dbReference type="ChEBI" id="CHEBI:77709"/>
        <dbReference type="ChEBI" id="CHEBI:78445"/>
        <dbReference type="EC" id="2.4.3.2"/>
    </reaction>
    <physiologicalReaction direction="left-to-right" evidence="14">
        <dbReference type="Rhea" id="RHEA:18022"/>
    </physiologicalReaction>
</comment>
<comment type="catalytic activity">
    <reaction evidence="6">
        <text>a ganglioside GA1 (d18:1(4E)) + CMP-N-acetyl-beta-neuraminate = a ganglioside GM1b (d18:1(4E)) + CMP + H(+)</text>
        <dbReference type="Rhea" id="RHEA:47560"/>
        <dbReference type="ChEBI" id="CHEBI:15378"/>
        <dbReference type="ChEBI" id="CHEBI:27938"/>
        <dbReference type="ChEBI" id="CHEBI:57812"/>
        <dbReference type="ChEBI" id="CHEBI:60377"/>
        <dbReference type="ChEBI" id="CHEBI:78568"/>
    </reaction>
    <physiologicalReaction direction="left-to-right" evidence="14">
        <dbReference type="Rhea" id="RHEA:47561"/>
    </physiologicalReaction>
</comment>
<comment type="catalytic activity">
    <reaction evidence="2">
        <text>a ganglioside GT1c (d18:1(4E)) + CMP-N-acetyl-beta-neuraminate = a ganglioside GQ1c (d18:1(4E)) + CMP + H(+)</text>
        <dbReference type="Rhea" id="RHEA:47588"/>
        <dbReference type="ChEBI" id="CHEBI:15378"/>
        <dbReference type="ChEBI" id="CHEBI:57812"/>
        <dbReference type="ChEBI" id="CHEBI:60377"/>
        <dbReference type="ChEBI" id="CHEBI:87789"/>
        <dbReference type="ChEBI" id="CHEBI:87791"/>
    </reaction>
    <physiologicalReaction direction="left-to-right" evidence="2">
        <dbReference type="Rhea" id="RHEA:47589"/>
    </physiologicalReaction>
</comment>
<comment type="catalytic activity">
    <reaction evidence="7">
        <text>a neolactoside nLc4Cer + CMP-N-acetyl-beta-neuraminate = a neolactoside IV(3)-alpha-NeuAc-nLc4Cer + CMP + H(+)</text>
        <dbReference type="Rhea" id="RHEA:65432"/>
        <dbReference type="ChEBI" id="CHEBI:15378"/>
        <dbReference type="ChEBI" id="CHEBI:57812"/>
        <dbReference type="ChEBI" id="CHEBI:60377"/>
        <dbReference type="ChEBI" id="CHEBI:90376"/>
        <dbReference type="ChEBI" id="CHEBI:90390"/>
    </reaction>
    <physiologicalReaction direction="left-to-right" evidence="15">
        <dbReference type="Rhea" id="RHEA:65433"/>
    </physiologicalReaction>
</comment>
<comment type="catalytic activity">
    <reaction evidence="15">
        <text>a neolactoside nLc4Cer(d18:1(4E)) + CMP-N-acetyl-beta-neuraminate = a neolactoside IV(3)-alpha-NeuAc-nLc4Cer(d18:1(4E)) + CMP + H(+)</text>
        <dbReference type="Rhea" id="RHEA:18913"/>
        <dbReference type="ChEBI" id="CHEBI:15378"/>
        <dbReference type="ChEBI" id="CHEBI:17006"/>
        <dbReference type="ChEBI" id="CHEBI:57812"/>
        <dbReference type="ChEBI" id="CHEBI:58665"/>
        <dbReference type="ChEBI" id="CHEBI:60377"/>
        <dbReference type="EC" id="2.4.3.6"/>
    </reaction>
    <physiologicalReaction direction="left-to-right" evidence="15">
        <dbReference type="Rhea" id="RHEA:18914"/>
    </physiologicalReaction>
</comment>
<comment type="biophysicochemical properties">
    <kinetics>
        <KM evidence="6">0.2 mM for Gal-beta-1,3-GalNAc</KM>
        <KM evidence="6">0.3 mM for Gal-beta-1,4-GlcNAc</KM>
    </kinetics>
</comment>
<comment type="pathway">
    <text evidence="14">Protein modification; protein glycosylation.</text>
</comment>
<comment type="pathway">
    <text evidence="14">Glycolipid biosynthesis.</text>
</comment>
<comment type="subcellular location">
    <subcellularLocation>
        <location>Golgi apparatus</location>
        <location>Golgi stack membrane</location>
        <topology>Single-pass type II membrane protein</topology>
    </subcellularLocation>
    <subcellularLocation>
        <location>Secreted</location>
    </subcellularLocation>
    <text>Membrane-bound form in trans cisternae of Golgi. Secreted into the body fluid.</text>
</comment>
<comment type="alternative products">
    <event type="alternative splicing"/>
    <isoform>
        <id>Q11206-1</id>
        <name>1</name>
        <name>B1</name>
        <sequence type="displayed"/>
    </isoform>
    <isoform>
        <id>Q11206-2</id>
        <name>2</name>
        <name>A1</name>
        <sequence type="described" ref="VSP_001784"/>
    </isoform>
    <isoform>
        <id>Q11206-3</id>
        <name>3</name>
        <name>A2</name>
        <sequence type="described" ref="VSP_001785"/>
    </isoform>
    <isoform>
        <id>Q11206-4</id>
        <name>4</name>
        <name>C</name>
        <sequence type="described" ref="VSP_001786"/>
    </isoform>
    <isoform>
        <id>Q11206-5</id>
        <name>5</name>
        <sequence type="described" ref="VSP_021104"/>
    </isoform>
    <isoform>
        <id>Q11206-6</id>
        <name>6</name>
        <sequence type="described" ref="VSP_001784 VSP_021104"/>
    </isoform>
    <isoform>
        <id>Q11206-7</id>
        <name>7</name>
        <sequence type="described" ref="VSP_001785 VSP_021104"/>
    </isoform>
</comment>
<comment type="tissue specificity">
    <text evidence="6">Highly expressed in adult placenta, heart and kidney.</text>
</comment>
<comment type="developmental stage">
    <text evidence="6">Expressed in fetal tissues, with highest levels in heart, lung, and kidney.</text>
</comment>
<comment type="PTM">
    <text>The soluble form derives from the membrane form by proteolytic processing.</text>
</comment>
<comment type="similarity">
    <text evidence="13">Belongs to the glycosyltransferase 29 family.</text>
</comment>
<comment type="online information" name="Functional Glycomics Gateway - GTase">
    <link uri="http://www.functionalglycomics.org/glycomics/molecule/jsp/glycoEnzyme/viewGlycoEnzyme.jsp?gbpId=gt_hum_625"/>
    <text>ST3Gal IV</text>
</comment>
<sequence>MVSKSRWKLLAMLALVLVVMVWYSISREDRYIELFYFPIPEKKEPCLQGEAESKASKLFGNYSRDQPIFLRLEDYFWVKTPSAYELPYGTKGSEDLLLRVLAITSSSIPKNIQSLRCRRCVVVGNGHRLRNSSLGDAINKYDVVIRLNNAPVAGYEGDVGSKTTMRLFYPESAHFDPKVENNPDTLLVLVAFKAMDFHWIETILSDKKRVRKGFWKQPPLIWDVNPKQIRILNPFFMEIAADKLLSLPMQQPRKIKQKPTTGLLAITLALHLCDLVHIAGFGYPDAYNKKQTIHYYEQITLKSMAGSGHNVSQEALAIKRMLEMGAIKNLTSF</sequence>
<organism>
    <name type="scientific">Homo sapiens</name>
    <name type="common">Human</name>
    <dbReference type="NCBI Taxonomy" id="9606"/>
    <lineage>
        <taxon>Eukaryota</taxon>
        <taxon>Metazoa</taxon>
        <taxon>Chordata</taxon>
        <taxon>Craniata</taxon>
        <taxon>Vertebrata</taxon>
        <taxon>Euteleostomi</taxon>
        <taxon>Mammalia</taxon>
        <taxon>Eutheria</taxon>
        <taxon>Euarchontoglires</taxon>
        <taxon>Primates</taxon>
        <taxon>Haplorrhini</taxon>
        <taxon>Catarrhini</taxon>
        <taxon>Hominidae</taxon>
        <taxon>Homo</taxon>
    </lineage>
</organism>
<evidence type="ECO:0000250" key="1"/>
<evidence type="ECO:0000250" key="2">
    <source>
        <dbReference type="UniProtKB" id="P61131"/>
    </source>
</evidence>
<evidence type="ECO:0000250" key="3">
    <source>
        <dbReference type="UniProtKB" id="Q91Y74"/>
    </source>
</evidence>
<evidence type="ECO:0000255" key="4"/>
<evidence type="ECO:0000269" key="5">
    <source>
    </source>
</evidence>
<evidence type="ECO:0000269" key="6">
    <source>
    </source>
</evidence>
<evidence type="ECO:0000269" key="7">
    <source>
    </source>
</evidence>
<evidence type="ECO:0000303" key="8">
    <source>
    </source>
</evidence>
<evidence type="ECO:0000303" key="9">
    <source>
    </source>
</evidence>
<evidence type="ECO:0000303" key="10">
    <source>
    </source>
</evidence>
<evidence type="ECO:0000303" key="11">
    <source>
    </source>
</evidence>
<evidence type="ECO:0000303" key="12">
    <source>
    </source>
</evidence>
<evidence type="ECO:0000305" key="13"/>
<evidence type="ECO:0000305" key="14">
    <source>
    </source>
</evidence>
<evidence type="ECO:0000305" key="15">
    <source>
    </source>
</evidence>
<accession>Q11206</accession>
<accession>A8K6B2</accession>
<accession>O60497</accession>
<accession>Q8N6A6</accession>
<accession>Q8NFG7</accession>
<accession>Q96QQ9</accession>